<gene>
    <name evidence="1" type="primary">tyrS</name>
    <name type="ordered locus">MW1671</name>
</gene>
<keyword id="KW-0030">Aminoacyl-tRNA synthetase</keyword>
<keyword id="KW-0067">ATP-binding</keyword>
<keyword id="KW-0963">Cytoplasm</keyword>
<keyword id="KW-0436">Ligase</keyword>
<keyword id="KW-0547">Nucleotide-binding</keyword>
<keyword id="KW-0648">Protein biosynthesis</keyword>
<keyword id="KW-0694">RNA-binding</keyword>
<reference key="1">
    <citation type="journal article" date="2002" name="Lancet">
        <title>Genome and virulence determinants of high virulence community-acquired MRSA.</title>
        <authorList>
            <person name="Baba T."/>
            <person name="Takeuchi F."/>
            <person name="Kuroda M."/>
            <person name="Yuzawa H."/>
            <person name="Aoki K."/>
            <person name="Oguchi A."/>
            <person name="Nagai Y."/>
            <person name="Iwama N."/>
            <person name="Asano K."/>
            <person name="Naimi T."/>
            <person name="Kuroda H."/>
            <person name="Cui L."/>
            <person name="Yamamoto K."/>
            <person name="Hiramatsu K."/>
        </authorList>
    </citation>
    <scope>NUCLEOTIDE SEQUENCE [LARGE SCALE GENOMIC DNA]</scope>
    <source>
        <strain>MW2</strain>
    </source>
</reference>
<feature type="chain" id="PRO_0000234777" description="Tyrosine--tRNA ligase">
    <location>
        <begin position="1"/>
        <end position="420"/>
    </location>
</feature>
<feature type="domain" description="S4 RNA-binding" evidence="1">
    <location>
        <begin position="353"/>
        <end position="420"/>
    </location>
</feature>
<feature type="short sequence motif" description="'HIGH' region">
    <location>
        <begin position="41"/>
        <end position="50"/>
    </location>
</feature>
<feature type="short sequence motif" description="'KMSKS' region">
    <location>
        <begin position="231"/>
        <end position="235"/>
    </location>
</feature>
<feature type="binding site" evidence="1">
    <location>
        <position position="36"/>
    </location>
    <ligand>
        <name>L-tyrosine</name>
        <dbReference type="ChEBI" id="CHEBI:58315"/>
    </ligand>
</feature>
<feature type="binding site" evidence="1">
    <location>
        <position position="170"/>
    </location>
    <ligand>
        <name>L-tyrosine</name>
        <dbReference type="ChEBI" id="CHEBI:58315"/>
    </ligand>
</feature>
<feature type="binding site" evidence="1">
    <location>
        <position position="174"/>
    </location>
    <ligand>
        <name>L-tyrosine</name>
        <dbReference type="ChEBI" id="CHEBI:58315"/>
    </ligand>
</feature>
<feature type="binding site" evidence="1">
    <location>
        <position position="234"/>
    </location>
    <ligand>
        <name>ATP</name>
        <dbReference type="ChEBI" id="CHEBI:30616"/>
    </ligand>
</feature>
<organism>
    <name type="scientific">Staphylococcus aureus (strain MW2)</name>
    <dbReference type="NCBI Taxonomy" id="196620"/>
    <lineage>
        <taxon>Bacteria</taxon>
        <taxon>Bacillati</taxon>
        <taxon>Bacillota</taxon>
        <taxon>Bacilli</taxon>
        <taxon>Bacillales</taxon>
        <taxon>Staphylococcaceae</taxon>
        <taxon>Staphylococcus</taxon>
    </lineage>
</organism>
<accession>Q7A0M7</accession>
<name>SYY_STAAW</name>
<sequence>MTNVLIEDLKWRGLIYQQTDEQGIEDLLNKEQVTLYCGADPTADSLHIGHLLPFLTLRRFQEHGHRPIVLIGGGTGMIGDPSGKSEERVLQTEEQVDKNIEGISKQMHNIFEFGTDHGAVLVNNRDWLGQISLISFLRDYGKHVGVNYMLGKDSIQSRLEHGISYTEFTYTILQAIDFGHLNRELNCKIQVGGSDQWGNITSGIELMRRMYGQTDAYGLTIPLVTKSDGKKFGKSESGAVWLDAEKTSPYEFYQFWINQSDEDVIKFLKYFTFLGKEEIDRLEQSKNEAPHLREAQKTLAEEVTKFIHGEDALNDAIRISQALFSGDLKSLSAKELKDGFKDVPQVTLSNDTTNIVEVLIETGISPSKRQAREDVNNGAIYINGERQQDVNYALAPEDKIDGEFTIIRRGKKKYFMVNYQ</sequence>
<dbReference type="EC" id="6.1.1.1" evidence="1"/>
<dbReference type="EMBL" id="BA000033">
    <property type="protein sequence ID" value="BAB95536.1"/>
    <property type="molecule type" value="Genomic_DNA"/>
</dbReference>
<dbReference type="RefSeq" id="WP_000186029.1">
    <property type="nucleotide sequence ID" value="NC_003923.1"/>
</dbReference>
<dbReference type="SMR" id="Q7A0M7"/>
<dbReference type="KEGG" id="sam:MW1671"/>
<dbReference type="HOGENOM" id="CLU_024003_0_3_9"/>
<dbReference type="GO" id="GO:0005829">
    <property type="term" value="C:cytosol"/>
    <property type="evidence" value="ECO:0007669"/>
    <property type="project" value="TreeGrafter"/>
</dbReference>
<dbReference type="GO" id="GO:0005524">
    <property type="term" value="F:ATP binding"/>
    <property type="evidence" value="ECO:0007669"/>
    <property type="project" value="UniProtKB-UniRule"/>
</dbReference>
<dbReference type="GO" id="GO:0003723">
    <property type="term" value="F:RNA binding"/>
    <property type="evidence" value="ECO:0007669"/>
    <property type="project" value="UniProtKB-KW"/>
</dbReference>
<dbReference type="GO" id="GO:0004831">
    <property type="term" value="F:tyrosine-tRNA ligase activity"/>
    <property type="evidence" value="ECO:0007669"/>
    <property type="project" value="UniProtKB-UniRule"/>
</dbReference>
<dbReference type="GO" id="GO:0006437">
    <property type="term" value="P:tyrosyl-tRNA aminoacylation"/>
    <property type="evidence" value="ECO:0007669"/>
    <property type="project" value="UniProtKB-UniRule"/>
</dbReference>
<dbReference type="CDD" id="cd00165">
    <property type="entry name" value="S4"/>
    <property type="match status" value="1"/>
</dbReference>
<dbReference type="CDD" id="cd00395">
    <property type="entry name" value="Tyr_Trp_RS_core"/>
    <property type="match status" value="1"/>
</dbReference>
<dbReference type="FunFam" id="1.10.240.10:FF:000001">
    <property type="entry name" value="Tyrosine--tRNA ligase"/>
    <property type="match status" value="1"/>
</dbReference>
<dbReference type="FunFam" id="3.10.290.10:FF:000012">
    <property type="entry name" value="Tyrosine--tRNA ligase"/>
    <property type="match status" value="1"/>
</dbReference>
<dbReference type="FunFam" id="3.40.50.620:FF:000008">
    <property type="entry name" value="Tyrosine--tRNA ligase"/>
    <property type="match status" value="1"/>
</dbReference>
<dbReference type="Gene3D" id="3.40.50.620">
    <property type="entry name" value="HUPs"/>
    <property type="match status" value="1"/>
</dbReference>
<dbReference type="Gene3D" id="3.10.290.10">
    <property type="entry name" value="RNA-binding S4 domain"/>
    <property type="match status" value="1"/>
</dbReference>
<dbReference type="Gene3D" id="1.10.240.10">
    <property type="entry name" value="Tyrosyl-Transfer RNA Synthetase"/>
    <property type="match status" value="1"/>
</dbReference>
<dbReference type="HAMAP" id="MF_02006">
    <property type="entry name" value="Tyr_tRNA_synth_type1"/>
    <property type="match status" value="1"/>
</dbReference>
<dbReference type="InterPro" id="IPR001412">
    <property type="entry name" value="aa-tRNA-synth_I_CS"/>
</dbReference>
<dbReference type="InterPro" id="IPR002305">
    <property type="entry name" value="aa-tRNA-synth_Ic"/>
</dbReference>
<dbReference type="InterPro" id="IPR014729">
    <property type="entry name" value="Rossmann-like_a/b/a_fold"/>
</dbReference>
<dbReference type="InterPro" id="IPR002942">
    <property type="entry name" value="S4_RNA-bd"/>
</dbReference>
<dbReference type="InterPro" id="IPR036986">
    <property type="entry name" value="S4_RNA-bd_sf"/>
</dbReference>
<dbReference type="InterPro" id="IPR054608">
    <property type="entry name" value="SYY-like_C"/>
</dbReference>
<dbReference type="InterPro" id="IPR002307">
    <property type="entry name" value="Tyr-tRNA-ligase"/>
</dbReference>
<dbReference type="InterPro" id="IPR024088">
    <property type="entry name" value="Tyr-tRNA-ligase_bac-type"/>
</dbReference>
<dbReference type="InterPro" id="IPR024107">
    <property type="entry name" value="Tyr-tRNA-ligase_bac_1"/>
</dbReference>
<dbReference type="NCBIfam" id="TIGR00234">
    <property type="entry name" value="tyrS"/>
    <property type="match status" value="1"/>
</dbReference>
<dbReference type="PANTHER" id="PTHR11766:SF0">
    <property type="entry name" value="TYROSINE--TRNA LIGASE, MITOCHONDRIAL"/>
    <property type="match status" value="1"/>
</dbReference>
<dbReference type="PANTHER" id="PTHR11766">
    <property type="entry name" value="TYROSYL-TRNA SYNTHETASE"/>
    <property type="match status" value="1"/>
</dbReference>
<dbReference type="Pfam" id="PF22421">
    <property type="entry name" value="SYY_C-terminal"/>
    <property type="match status" value="1"/>
</dbReference>
<dbReference type="Pfam" id="PF00579">
    <property type="entry name" value="tRNA-synt_1b"/>
    <property type="match status" value="1"/>
</dbReference>
<dbReference type="PRINTS" id="PR01040">
    <property type="entry name" value="TRNASYNTHTYR"/>
</dbReference>
<dbReference type="SMART" id="SM00363">
    <property type="entry name" value="S4"/>
    <property type="match status" value="1"/>
</dbReference>
<dbReference type="SUPFAM" id="SSF55174">
    <property type="entry name" value="Alpha-L RNA-binding motif"/>
    <property type="match status" value="1"/>
</dbReference>
<dbReference type="SUPFAM" id="SSF52374">
    <property type="entry name" value="Nucleotidylyl transferase"/>
    <property type="match status" value="1"/>
</dbReference>
<dbReference type="PROSITE" id="PS00178">
    <property type="entry name" value="AA_TRNA_LIGASE_I"/>
    <property type="match status" value="1"/>
</dbReference>
<dbReference type="PROSITE" id="PS50889">
    <property type="entry name" value="S4"/>
    <property type="match status" value="1"/>
</dbReference>
<protein>
    <recommendedName>
        <fullName evidence="1">Tyrosine--tRNA ligase</fullName>
        <ecNumber evidence="1">6.1.1.1</ecNumber>
    </recommendedName>
    <alternativeName>
        <fullName evidence="1">Tyrosyl-tRNA synthetase</fullName>
        <shortName evidence="1">TyrRS</shortName>
    </alternativeName>
</protein>
<comment type="function">
    <text evidence="1">Catalyzes the attachment of tyrosine to tRNA(Tyr) in a two-step reaction: tyrosine is first activated by ATP to form Tyr-AMP and then transferred to the acceptor end of tRNA(Tyr).</text>
</comment>
<comment type="catalytic activity">
    <reaction evidence="1">
        <text>tRNA(Tyr) + L-tyrosine + ATP = L-tyrosyl-tRNA(Tyr) + AMP + diphosphate + H(+)</text>
        <dbReference type="Rhea" id="RHEA:10220"/>
        <dbReference type="Rhea" id="RHEA-COMP:9706"/>
        <dbReference type="Rhea" id="RHEA-COMP:9707"/>
        <dbReference type="ChEBI" id="CHEBI:15378"/>
        <dbReference type="ChEBI" id="CHEBI:30616"/>
        <dbReference type="ChEBI" id="CHEBI:33019"/>
        <dbReference type="ChEBI" id="CHEBI:58315"/>
        <dbReference type="ChEBI" id="CHEBI:78442"/>
        <dbReference type="ChEBI" id="CHEBI:78536"/>
        <dbReference type="ChEBI" id="CHEBI:456215"/>
        <dbReference type="EC" id="6.1.1.1"/>
    </reaction>
</comment>
<comment type="subunit">
    <text evidence="1">Homodimer.</text>
</comment>
<comment type="subcellular location">
    <subcellularLocation>
        <location evidence="1">Cytoplasm</location>
    </subcellularLocation>
</comment>
<comment type="similarity">
    <text evidence="1">Belongs to the class-I aminoacyl-tRNA synthetase family. TyrS type 1 subfamily.</text>
</comment>
<evidence type="ECO:0000255" key="1">
    <source>
        <dbReference type="HAMAP-Rule" id="MF_02006"/>
    </source>
</evidence>
<proteinExistence type="inferred from homology"/>